<reference key="1">
    <citation type="journal article" date="1996" name="Microbiology">
        <title>The 25 degrees-36 degrees region of the Bacillus subtilis chromosome: determination of the sequence of a 146 kb segment and identification of 113 genes.</title>
        <authorList>
            <person name="Yamane K."/>
            <person name="Kumano M."/>
            <person name="Kurita K."/>
        </authorList>
    </citation>
    <scope>NUCLEOTIDE SEQUENCE [GENOMIC DNA]</scope>
    <source>
        <strain>168</strain>
    </source>
</reference>
<reference key="2">
    <citation type="journal article" date="1997" name="Nature">
        <title>The complete genome sequence of the Gram-positive bacterium Bacillus subtilis.</title>
        <authorList>
            <person name="Kunst F."/>
            <person name="Ogasawara N."/>
            <person name="Moszer I."/>
            <person name="Albertini A.M."/>
            <person name="Alloni G."/>
            <person name="Azevedo V."/>
            <person name="Bertero M.G."/>
            <person name="Bessieres P."/>
            <person name="Bolotin A."/>
            <person name="Borchert S."/>
            <person name="Borriss R."/>
            <person name="Boursier L."/>
            <person name="Brans A."/>
            <person name="Braun M."/>
            <person name="Brignell S.C."/>
            <person name="Bron S."/>
            <person name="Brouillet S."/>
            <person name="Bruschi C.V."/>
            <person name="Caldwell B."/>
            <person name="Capuano V."/>
            <person name="Carter N.M."/>
            <person name="Choi S.-K."/>
            <person name="Codani J.-J."/>
            <person name="Connerton I.F."/>
            <person name="Cummings N.J."/>
            <person name="Daniel R.A."/>
            <person name="Denizot F."/>
            <person name="Devine K.M."/>
            <person name="Duesterhoeft A."/>
            <person name="Ehrlich S.D."/>
            <person name="Emmerson P.T."/>
            <person name="Entian K.-D."/>
            <person name="Errington J."/>
            <person name="Fabret C."/>
            <person name="Ferrari E."/>
            <person name="Foulger D."/>
            <person name="Fritz C."/>
            <person name="Fujita M."/>
            <person name="Fujita Y."/>
            <person name="Fuma S."/>
            <person name="Galizzi A."/>
            <person name="Galleron N."/>
            <person name="Ghim S.-Y."/>
            <person name="Glaser P."/>
            <person name="Goffeau A."/>
            <person name="Golightly E.J."/>
            <person name="Grandi G."/>
            <person name="Guiseppi G."/>
            <person name="Guy B.J."/>
            <person name="Haga K."/>
            <person name="Haiech J."/>
            <person name="Harwood C.R."/>
            <person name="Henaut A."/>
            <person name="Hilbert H."/>
            <person name="Holsappel S."/>
            <person name="Hosono S."/>
            <person name="Hullo M.-F."/>
            <person name="Itaya M."/>
            <person name="Jones L.-M."/>
            <person name="Joris B."/>
            <person name="Karamata D."/>
            <person name="Kasahara Y."/>
            <person name="Klaerr-Blanchard M."/>
            <person name="Klein C."/>
            <person name="Kobayashi Y."/>
            <person name="Koetter P."/>
            <person name="Koningstein G."/>
            <person name="Krogh S."/>
            <person name="Kumano M."/>
            <person name="Kurita K."/>
            <person name="Lapidus A."/>
            <person name="Lardinois S."/>
            <person name="Lauber J."/>
            <person name="Lazarevic V."/>
            <person name="Lee S.-M."/>
            <person name="Levine A."/>
            <person name="Liu H."/>
            <person name="Masuda S."/>
            <person name="Mauel C."/>
            <person name="Medigue C."/>
            <person name="Medina N."/>
            <person name="Mellado R.P."/>
            <person name="Mizuno M."/>
            <person name="Moestl D."/>
            <person name="Nakai S."/>
            <person name="Noback M."/>
            <person name="Noone D."/>
            <person name="O'Reilly M."/>
            <person name="Ogawa K."/>
            <person name="Ogiwara A."/>
            <person name="Oudega B."/>
            <person name="Park S.-H."/>
            <person name="Parro V."/>
            <person name="Pohl T.M."/>
            <person name="Portetelle D."/>
            <person name="Porwollik S."/>
            <person name="Prescott A.M."/>
            <person name="Presecan E."/>
            <person name="Pujic P."/>
            <person name="Purnelle B."/>
            <person name="Rapoport G."/>
            <person name="Rey M."/>
            <person name="Reynolds S."/>
            <person name="Rieger M."/>
            <person name="Rivolta C."/>
            <person name="Rocha E."/>
            <person name="Roche B."/>
            <person name="Rose M."/>
            <person name="Sadaie Y."/>
            <person name="Sato T."/>
            <person name="Scanlan E."/>
            <person name="Schleich S."/>
            <person name="Schroeter R."/>
            <person name="Scoffone F."/>
            <person name="Sekiguchi J."/>
            <person name="Sekowska A."/>
            <person name="Seror S.J."/>
            <person name="Serror P."/>
            <person name="Shin B.-S."/>
            <person name="Soldo B."/>
            <person name="Sorokin A."/>
            <person name="Tacconi E."/>
            <person name="Takagi T."/>
            <person name="Takahashi H."/>
            <person name="Takemaru K."/>
            <person name="Takeuchi M."/>
            <person name="Tamakoshi A."/>
            <person name="Tanaka T."/>
            <person name="Terpstra P."/>
            <person name="Tognoni A."/>
            <person name="Tosato V."/>
            <person name="Uchiyama S."/>
            <person name="Vandenbol M."/>
            <person name="Vannier F."/>
            <person name="Vassarotti A."/>
            <person name="Viari A."/>
            <person name="Wambutt R."/>
            <person name="Wedler E."/>
            <person name="Wedler H."/>
            <person name="Weitzenegger T."/>
            <person name="Winters P."/>
            <person name="Wipat A."/>
            <person name="Yamamoto H."/>
            <person name="Yamane K."/>
            <person name="Yasumoto K."/>
            <person name="Yata K."/>
            <person name="Yoshida K."/>
            <person name="Yoshikawa H.-F."/>
            <person name="Zumstein E."/>
            <person name="Yoshikawa H."/>
            <person name="Danchin A."/>
        </authorList>
    </citation>
    <scope>NUCLEOTIDE SEQUENCE [LARGE SCALE GENOMIC DNA]</scope>
    <source>
        <strain>168</strain>
    </source>
</reference>
<reference key="3">
    <citation type="journal article" date="2009" name="Microbiology">
        <title>From a consortium sequence to a unified sequence: the Bacillus subtilis 168 reference genome a decade later.</title>
        <authorList>
            <person name="Barbe V."/>
            <person name="Cruveiller S."/>
            <person name="Kunst F."/>
            <person name="Lenoble P."/>
            <person name="Meurice G."/>
            <person name="Sekowska A."/>
            <person name="Vallenet D."/>
            <person name="Wang T."/>
            <person name="Moszer I."/>
            <person name="Medigue C."/>
            <person name="Danchin A."/>
        </authorList>
    </citation>
    <scope>SEQUENCE REVISION TO 23 AND 114</scope>
</reference>
<proteinExistence type="inferred from homology"/>
<keyword id="KW-0238">DNA-binding</keyword>
<keyword id="KW-1185">Reference proteome</keyword>
<keyword id="KW-0804">Transcription</keyword>
<keyword id="KW-0805">Transcription regulation</keyword>
<feature type="chain" id="PRO_0000359947" description="Uncharacterized HTH-type transcriptional regulator YcgK">
    <location>
        <begin position="1"/>
        <end position="324"/>
    </location>
</feature>
<feature type="domain" description="HTH lysR-type" evidence="1">
    <location>
        <begin position="1"/>
        <end position="58"/>
    </location>
</feature>
<feature type="DNA-binding region" description="H-T-H motif" evidence="1">
    <location>
        <begin position="18"/>
        <end position="37"/>
    </location>
</feature>
<feature type="sequence conflict" description="In Ref. 1; BAA08951." evidence="2" ref="1">
    <original>E</original>
    <variation>V</variation>
    <location>
        <position position="23"/>
    </location>
</feature>
<feature type="sequence conflict" description="In Ref. 1; BAA08951." evidence="2" ref="1">
    <original>L</original>
    <variation>V</variation>
    <location>
        <position position="114"/>
    </location>
</feature>
<gene>
    <name type="primary">ycgK</name>
    <name type="ordered locus">BSU03170</name>
</gene>
<sequence>MDIKVMEYAAEIARRQSFTKAAEHLHIAQPSLSQQIKKLEAELGLTLFHRSHGSVTLTPHGRRFIEKAEDIIRSRDDLLREMQERSQGIGHKLSIGIPAVTGRYLFPPLLKQFLARYPHVEVQLVEKDPVSLEKMTAKGEVDLSVLSLPIEDERLSITPLLTEPVVLAVPKEKQRWMPPELVALIEKALEEDEGRQPCVPIDMVRNVPFILLKEGFGFRRTVLDLCAESGFKPNAAFKTSHIETAQSLVANGLGVTMAPNMVRRDKDPGVIYLSIQSAPSRTLVFVFLKNRYVSLTAQAFMELSRESLKQTFDEGCLGNKDENI</sequence>
<name>YCGK_BACSU</name>
<organism>
    <name type="scientific">Bacillus subtilis (strain 168)</name>
    <dbReference type="NCBI Taxonomy" id="224308"/>
    <lineage>
        <taxon>Bacteria</taxon>
        <taxon>Bacillati</taxon>
        <taxon>Bacillota</taxon>
        <taxon>Bacilli</taxon>
        <taxon>Bacillales</taxon>
        <taxon>Bacillaceae</taxon>
        <taxon>Bacillus</taxon>
    </lineage>
</organism>
<evidence type="ECO:0000255" key="1">
    <source>
        <dbReference type="PROSITE-ProRule" id="PRU00253"/>
    </source>
</evidence>
<evidence type="ECO:0000305" key="2"/>
<comment type="similarity">
    <text evidence="2">Belongs to the LysR transcriptional regulatory family.</text>
</comment>
<protein>
    <recommendedName>
        <fullName>Uncharacterized HTH-type transcriptional regulator YcgK</fullName>
    </recommendedName>
</protein>
<dbReference type="EMBL" id="D50453">
    <property type="protein sequence ID" value="BAA08951.1"/>
    <property type="molecule type" value="Genomic_DNA"/>
</dbReference>
<dbReference type="EMBL" id="AL009126">
    <property type="protein sequence ID" value="CAB12111.2"/>
    <property type="molecule type" value="Genomic_DNA"/>
</dbReference>
<dbReference type="PIR" id="F69758">
    <property type="entry name" value="F69758"/>
</dbReference>
<dbReference type="RefSeq" id="NP_388199.2">
    <property type="nucleotide sequence ID" value="NC_000964.3"/>
</dbReference>
<dbReference type="RefSeq" id="WP_003246430.1">
    <property type="nucleotide sequence ID" value="NZ_OZ025638.1"/>
</dbReference>
<dbReference type="SMR" id="P94387"/>
<dbReference type="FunCoup" id="P94387">
    <property type="interactions" value="184"/>
</dbReference>
<dbReference type="STRING" id="224308.BSU03170"/>
<dbReference type="PaxDb" id="224308-BSU03170"/>
<dbReference type="EnsemblBacteria" id="CAB12111">
    <property type="protein sequence ID" value="CAB12111"/>
    <property type="gene ID" value="BSU_03170"/>
</dbReference>
<dbReference type="GeneID" id="938340"/>
<dbReference type="KEGG" id="bsu:BSU03170"/>
<dbReference type="PATRIC" id="fig|224308.179.peg.331"/>
<dbReference type="eggNOG" id="COG0583">
    <property type="taxonomic scope" value="Bacteria"/>
</dbReference>
<dbReference type="InParanoid" id="P94387"/>
<dbReference type="OrthoDB" id="9803735at2"/>
<dbReference type="PhylomeDB" id="P94387"/>
<dbReference type="BioCyc" id="BSUB:BSU03170-MONOMER"/>
<dbReference type="Proteomes" id="UP000001570">
    <property type="component" value="Chromosome"/>
</dbReference>
<dbReference type="GO" id="GO:0032993">
    <property type="term" value="C:protein-DNA complex"/>
    <property type="evidence" value="ECO:0000318"/>
    <property type="project" value="GO_Central"/>
</dbReference>
<dbReference type="GO" id="GO:0003677">
    <property type="term" value="F:DNA binding"/>
    <property type="evidence" value="ECO:0007669"/>
    <property type="project" value="UniProtKB-KW"/>
</dbReference>
<dbReference type="GO" id="GO:0003700">
    <property type="term" value="F:DNA-binding transcription factor activity"/>
    <property type="evidence" value="ECO:0000318"/>
    <property type="project" value="GO_Central"/>
</dbReference>
<dbReference type="GO" id="GO:0006355">
    <property type="term" value="P:regulation of DNA-templated transcription"/>
    <property type="evidence" value="ECO:0000318"/>
    <property type="project" value="GO_Central"/>
</dbReference>
<dbReference type="CDD" id="cd05466">
    <property type="entry name" value="PBP2_LTTR_substrate"/>
    <property type="match status" value="1"/>
</dbReference>
<dbReference type="FunFam" id="1.10.10.10:FF:000001">
    <property type="entry name" value="LysR family transcriptional regulator"/>
    <property type="match status" value="1"/>
</dbReference>
<dbReference type="Gene3D" id="3.40.190.290">
    <property type="match status" value="1"/>
</dbReference>
<dbReference type="Gene3D" id="1.10.10.10">
    <property type="entry name" value="Winged helix-like DNA-binding domain superfamily/Winged helix DNA-binding domain"/>
    <property type="match status" value="1"/>
</dbReference>
<dbReference type="InterPro" id="IPR005119">
    <property type="entry name" value="LysR_subst-bd"/>
</dbReference>
<dbReference type="InterPro" id="IPR000847">
    <property type="entry name" value="Tscrpt_reg_HTH_LysR"/>
</dbReference>
<dbReference type="InterPro" id="IPR036388">
    <property type="entry name" value="WH-like_DNA-bd_sf"/>
</dbReference>
<dbReference type="InterPro" id="IPR036390">
    <property type="entry name" value="WH_DNA-bd_sf"/>
</dbReference>
<dbReference type="PANTHER" id="PTHR30346:SF28">
    <property type="entry name" value="HTH-TYPE TRANSCRIPTIONAL REGULATOR CYNR"/>
    <property type="match status" value="1"/>
</dbReference>
<dbReference type="PANTHER" id="PTHR30346">
    <property type="entry name" value="TRANSCRIPTIONAL DUAL REGULATOR HCAR-RELATED"/>
    <property type="match status" value="1"/>
</dbReference>
<dbReference type="Pfam" id="PF00126">
    <property type="entry name" value="HTH_1"/>
    <property type="match status" value="1"/>
</dbReference>
<dbReference type="Pfam" id="PF03466">
    <property type="entry name" value="LysR_substrate"/>
    <property type="match status" value="1"/>
</dbReference>
<dbReference type="PRINTS" id="PR00039">
    <property type="entry name" value="HTHLYSR"/>
</dbReference>
<dbReference type="SUPFAM" id="SSF53850">
    <property type="entry name" value="Periplasmic binding protein-like II"/>
    <property type="match status" value="1"/>
</dbReference>
<dbReference type="SUPFAM" id="SSF46785">
    <property type="entry name" value="Winged helix' DNA-binding domain"/>
    <property type="match status" value="1"/>
</dbReference>
<dbReference type="PROSITE" id="PS50931">
    <property type="entry name" value="HTH_LYSR"/>
    <property type="match status" value="1"/>
</dbReference>
<accession>P94387</accession>
<accession>Q797Q8</accession>